<accession>B0TER7</accession>
<gene>
    <name evidence="2" type="primary">mutM</name>
    <name evidence="2" type="synonym">fpg</name>
    <name type="ordered locus">Helmi_16940</name>
    <name type="ORF">HM1_1749</name>
</gene>
<proteinExistence type="inferred from homology"/>
<feature type="initiator methionine" description="Removed" evidence="1">
    <location>
        <position position="1"/>
    </location>
</feature>
<feature type="chain" id="PRO_1000094048" description="Formamidopyrimidine-DNA glycosylase">
    <location>
        <begin position="2"/>
        <end position="277"/>
    </location>
</feature>
<feature type="zinc finger region" description="FPG-type" evidence="2">
    <location>
        <begin position="243"/>
        <end position="277"/>
    </location>
</feature>
<feature type="active site" description="Schiff-base intermediate with DNA" evidence="2">
    <location>
        <position position="2"/>
    </location>
</feature>
<feature type="active site" description="Proton donor" evidence="2">
    <location>
        <position position="3"/>
    </location>
</feature>
<feature type="active site" description="Proton donor; for beta-elimination activity" evidence="2">
    <location>
        <position position="59"/>
    </location>
</feature>
<feature type="active site" description="Proton donor; for delta-elimination activity" evidence="2">
    <location>
        <position position="267"/>
    </location>
</feature>
<feature type="binding site" evidence="2">
    <location>
        <position position="96"/>
    </location>
    <ligand>
        <name>DNA</name>
        <dbReference type="ChEBI" id="CHEBI:16991"/>
    </ligand>
</feature>
<feature type="binding site" evidence="2">
    <location>
        <position position="115"/>
    </location>
    <ligand>
        <name>DNA</name>
        <dbReference type="ChEBI" id="CHEBI:16991"/>
    </ligand>
</feature>
<feature type="binding site" evidence="2">
    <location>
        <position position="158"/>
    </location>
    <ligand>
        <name>DNA</name>
        <dbReference type="ChEBI" id="CHEBI:16991"/>
    </ligand>
</feature>
<organism>
    <name type="scientific">Heliobacterium modesticaldum (strain ATCC 51547 / Ice1)</name>
    <dbReference type="NCBI Taxonomy" id="498761"/>
    <lineage>
        <taxon>Bacteria</taxon>
        <taxon>Bacillati</taxon>
        <taxon>Bacillota</taxon>
        <taxon>Clostridia</taxon>
        <taxon>Eubacteriales</taxon>
        <taxon>Heliobacteriaceae</taxon>
        <taxon>Heliomicrobium</taxon>
    </lineage>
</organism>
<dbReference type="EC" id="3.2.2.23" evidence="2"/>
<dbReference type="EC" id="4.2.99.18" evidence="2"/>
<dbReference type="EMBL" id="CP000930">
    <property type="protein sequence ID" value="ABZ84319.1"/>
    <property type="molecule type" value="Genomic_DNA"/>
</dbReference>
<dbReference type="RefSeq" id="WP_012282823.1">
    <property type="nucleotide sequence ID" value="NC_010337.2"/>
</dbReference>
<dbReference type="SMR" id="B0TER7"/>
<dbReference type="STRING" id="498761.HM1_1749"/>
<dbReference type="KEGG" id="hmo:HM1_1749"/>
<dbReference type="eggNOG" id="COG0266">
    <property type="taxonomic scope" value="Bacteria"/>
</dbReference>
<dbReference type="HOGENOM" id="CLU_038423_1_2_9"/>
<dbReference type="OrthoDB" id="9800855at2"/>
<dbReference type="Proteomes" id="UP000008550">
    <property type="component" value="Chromosome"/>
</dbReference>
<dbReference type="GO" id="GO:0034039">
    <property type="term" value="F:8-oxo-7,8-dihydroguanine DNA N-glycosylase activity"/>
    <property type="evidence" value="ECO:0007669"/>
    <property type="project" value="TreeGrafter"/>
</dbReference>
<dbReference type="GO" id="GO:0140078">
    <property type="term" value="F:class I DNA-(apurinic or apyrimidinic site) endonuclease activity"/>
    <property type="evidence" value="ECO:0007669"/>
    <property type="project" value="UniProtKB-EC"/>
</dbReference>
<dbReference type="GO" id="GO:0003684">
    <property type="term" value="F:damaged DNA binding"/>
    <property type="evidence" value="ECO:0007669"/>
    <property type="project" value="InterPro"/>
</dbReference>
<dbReference type="GO" id="GO:0008270">
    <property type="term" value="F:zinc ion binding"/>
    <property type="evidence" value="ECO:0007669"/>
    <property type="project" value="UniProtKB-UniRule"/>
</dbReference>
<dbReference type="GO" id="GO:0006284">
    <property type="term" value="P:base-excision repair"/>
    <property type="evidence" value="ECO:0007669"/>
    <property type="project" value="InterPro"/>
</dbReference>
<dbReference type="CDD" id="cd08966">
    <property type="entry name" value="EcFpg-like_N"/>
    <property type="match status" value="1"/>
</dbReference>
<dbReference type="FunFam" id="1.10.8.50:FF:000003">
    <property type="entry name" value="Formamidopyrimidine-DNA glycosylase"/>
    <property type="match status" value="1"/>
</dbReference>
<dbReference type="Gene3D" id="1.10.8.50">
    <property type="match status" value="1"/>
</dbReference>
<dbReference type="Gene3D" id="3.20.190.10">
    <property type="entry name" value="MutM-like, N-terminal"/>
    <property type="match status" value="1"/>
</dbReference>
<dbReference type="HAMAP" id="MF_00103">
    <property type="entry name" value="Fapy_DNA_glycosyl"/>
    <property type="match status" value="1"/>
</dbReference>
<dbReference type="InterPro" id="IPR015886">
    <property type="entry name" value="DNA_glyclase/AP_lyase_DNA-bd"/>
</dbReference>
<dbReference type="InterPro" id="IPR015887">
    <property type="entry name" value="DNA_glyclase_Znf_dom_DNA_BS"/>
</dbReference>
<dbReference type="InterPro" id="IPR020629">
    <property type="entry name" value="Formamido-pyr_DNA_Glyclase"/>
</dbReference>
<dbReference type="InterPro" id="IPR012319">
    <property type="entry name" value="FPG_cat"/>
</dbReference>
<dbReference type="InterPro" id="IPR035937">
    <property type="entry name" value="MutM-like_N-ter"/>
</dbReference>
<dbReference type="InterPro" id="IPR010979">
    <property type="entry name" value="Ribosomal_uS13-like_H2TH"/>
</dbReference>
<dbReference type="InterPro" id="IPR000214">
    <property type="entry name" value="Znf_DNA_glyclase/AP_lyase"/>
</dbReference>
<dbReference type="InterPro" id="IPR010663">
    <property type="entry name" value="Znf_FPG/IleRS"/>
</dbReference>
<dbReference type="NCBIfam" id="TIGR00577">
    <property type="entry name" value="fpg"/>
    <property type="match status" value="1"/>
</dbReference>
<dbReference type="NCBIfam" id="NF002211">
    <property type="entry name" value="PRK01103.1"/>
    <property type="match status" value="1"/>
</dbReference>
<dbReference type="PANTHER" id="PTHR22993">
    <property type="entry name" value="FORMAMIDOPYRIMIDINE-DNA GLYCOSYLASE"/>
    <property type="match status" value="1"/>
</dbReference>
<dbReference type="PANTHER" id="PTHR22993:SF9">
    <property type="entry name" value="FORMAMIDOPYRIMIDINE-DNA GLYCOSYLASE"/>
    <property type="match status" value="1"/>
</dbReference>
<dbReference type="Pfam" id="PF01149">
    <property type="entry name" value="Fapy_DNA_glyco"/>
    <property type="match status" value="1"/>
</dbReference>
<dbReference type="Pfam" id="PF06831">
    <property type="entry name" value="H2TH"/>
    <property type="match status" value="1"/>
</dbReference>
<dbReference type="Pfam" id="PF06827">
    <property type="entry name" value="zf-FPG_IleRS"/>
    <property type="match status" value="1"/>
</dbReference>
<dbReference type="SMART" id="SM00898">
    <property type="entry name" value="Fapy_DNA_glyco"/>
    <property type="match status" value="1"/>
</dbReference>
<dbReference type="SMART" id="SM01232">
    <property type="entry name" value="H2TH"/>
    <property type="match status" value="1"/>
</dbReference>
<dbReference type="SUPFAM" id="SSF57716">
    <property type="entry name" value="Glucocorticoid receptor-like (DNA-binding domain)"/>
    <property type="match status" value="1"/>
</dbReference>
<dbReference type="SUPFAM" id="SSF81624">
    <property type="entry name" value="N-terminal domain of MutM-like DNA repair proteins"/>
    <property type="match status" value="1"/>
</dbReference>
<dbReference type="SUPFAM" id="SSF46946">
    <property type="entry name" value="S13-like H2TH domain"/>
    <property type="match status" value="1"/>
</dbReference>
<dbReference type="PROSITE" id="PS51068">
    <property type="entry name" value="FPG_CAT"/>
    <property type="match status" value="1"/>
</dbReference>
<dbReference type="PROSITE" id="PS01242">
    <property type="entry name" value="ZF_FPG_1"/>
    <property type="match status" value="1"/>
</dbReference>
<dbReference type="PROSITE" id="PS51066">
    <property type="entry name" value="ZF_FPG_2"/>
    <property type="match status" value="1"/>
</dbReference>
<keyword id="KW-0227">DNA damage</keyword>
<keyword id="KW-0234">DNA repair</keyword>
<keyword id="KW-0238">DNA-binding</keyword>
<keyword id="KW-0326">Glycosidase</keyword>
<keyword id="KW-0378">Hydrolase</keyword>
<keyword id="KW-0456">Lyase</keyword>
<keyword id="KW-0479">Metal-binding</keyword>
<keyword id="KW-0511">Multifunctional enzyme</keyword>
<keyword id="KW-1185">Reference proteome</keyword>
<keyword id="KW-0862">Zinc</keyword>
<keyword id="KW-0863">Zinc-finger</keyword>
<name>FPG_HELMI</name>
<sequence>MPELPEVETVRRSLAGRITGLTIEKVELRLPKIAFALPGTLFTDALRGRRIIELGRRGKYLLLHLDGDETLVIHLRMTGRLIHLRPEEREEPEAAHTHAVFFLDDGSLLRYTDVRQFGTLTLMTREAALRQPGKGRLGPEPLGQDFSFVDFRNALVKRKTKLKPLLLDQSFLAGLGNIYADEALARARLHPDRTADSLDDEESRRLYDCIRTVLQEGIDAKGTSFRDYVDGEGRKGEFQEKLWVYGRGGNPCRRCGGEILREKRAGRSTHFCPRCQK</sequence>
<evidence type="ECO:0000250" key="1"/>
<evidence type="ECO:0000255" key="2">
    <source>
        <dbReference type="HAMAP-Rule" id="MF_00103"/>
    </source>
</evidence>
<reference key="1">
    <citation type="journal article" date="2008" name="J. Bacteriol.">
        <title>The genome of Heliobacterium modesticaldum, a phototrophic representative of the Firmicutes containing the simplest photosynthetic apparatus.</title>
        <authorList>
            <person name="Sattley W.M."/>
            <person name="Madigan M.T."/>
            <person name="Swingley W.D."/>
            <person name="Cheung P.C."/>
            <person name="Clocksin K.M."/>
            <person name="Conrad A.L."/>
            <person name="Dejesa L.C."/>
            <person name="Honchak B.M."/>
            <person name="Jung D.O."/>
            <person name="Karbach L.E."/>
            <person name="Kurdoglu A."/>
            <person name="Lahiri S."/>
            <person name="Mastrian S.D."/>
            <person name="Page L.E."/>
            <person name="Taylor H.L."/>
            <person name="Wang Z.T."/>
            <person name="Raymond J."/>
            <person name="Chen M."/>
            <person name="Blankenship R.E."/>
            <person name="Touchman J.W."/>
        </authorList>
    </citation>
    <scope>NUCLEOTIDE SEQUENCE [LARGE SCALE GENOMIC DNA]</scope>
    <source>
        <strain>ATCC 51547 / Ice1</strain>
    </source>
</reference>
<protein>
    <recommendedName>
        <fullName evidence="2">Formamidopyrimidine-DNA glycosylase</fullName>
        <shortName evidence="2">Fapy-DNA glycosylase</shortName>
        <ecNumber evidence="2">3.2.2.23</ecNumber>
    </recommendedName>
    <alternativeName>
        <fullName evidence="2">DNA-(apurinic or apyrimidinic site) lyase MutM</fullName>
        <shortName evidence="2">AP lyase MutM</shortName>
        <ecNumber evidence="2">4.2.99.18</ecNumber>
    </alternativeName>
</protein>
<comment type="function">
    <text evidence="2">Involved in base excision repair of DNA damaged by oxidation or by mutagenic agents. Acts as a DNA glycosylase that recognizes and removes damaged bases. Has a preference for oxidized purines, such as 7,8-dihydro-8-oxoguanine (8-oxoG). Has AP (apurinic/apyrimidinic) lyase activity and introduces nicks in the DNA strand. Cleaves the DNA backbone by beta-delta elimination to generate a single-strand break at the site of the removed base with both 3'- and 5'-phosphates.</text>
</comment>
<comment type="catalytic activity">
    <reaction evidence="2">
        <text>Hydrolysis of DNA containing ring-opened 7-methylguanine residues, releasing 2,6-diamino-4-hydroxy-5-(N-methyl)formamidopyrimidine.</text>
        <dbReference type="EC" id="3.2.2.23"/>
    </reaction>
</comment>
<comment type="catalytic activity">
    <reaction evidence="2">
        <text>2'-deoxyribonucleotide-(2'-deoxyribose 5'-phosphate)-2'-deoxyribonucleotide-DNA = a 3'-end 2'-deoxyribonucleotide-(2,3-dehydro-2,3-deoxyribose 5'-phosphate)-DNA + a 5'-end 5'-phospho-2'-deoxyribonucleoside-DNA + H(+)</text>
        <dbReference type="Rhea" id="RHEA:66592"/>
        <dbReference type="Rhea" id="RHEA-COMP:13180"/>
        <dbReference type="Rhea" id="RHEA-COMP:16897"/>
        <dbReference type="Rhea" id="RHEA-COMP:17067"/>
        <dbReference type="ChEBI" id="CHEBI:15378"/>
        <dbReference type="ChEBI" id="CHEBI:136412"/>
        <dbReference type="ChEBI" id="CHEBI:157695"/>
        <dbReference type="ChEBI" id="CHEBI:167181"/>
        <dbReference type="EC" id="4.2.99.18"/>
    </reaction>
</comment>
<comment type="cofactor">
    <cofactor evidence="2">
        <name>Zn(2+)</name>
        <dbReference type="ChEBI" id="CHEBI:29105"/>
    </cofactor>
    <text evidence="2">Binds 1 zinc ion per subunit.</text>
</comment>
<comment type="subunit">
    <text evidence="2">Monomer.</text>
</comment>
<comment type="similarity">
    <text evidence="2">Belongs to the FPG family.</text>
</comment>